<accession>P79357</accession>
<comment type="function">
    <text>Indispensable for the control of thyroid structure and metabolism.</text>
</comment>
<comment type="subunit">
    <text>Heterodimer of a common alpha chain and a unique beta chain which confers biological specificity to thyrotropin, lutropin, follitropin and gonadotropin.</text>
</comment>
<comment type="subcellular location">
    <subcellularLocation>
        <location>Secreted</location>
    </subcellularLocation>
</comment>
<comment type="similarity">
    <text evidence="3">Belongs to the glycoprotein hormones subunit beta family.</text>
</comment>
<sequence length="138" mass="15571">MTAIFLMSVLFGLACGQAMSFCIPTEYMMHVERKECAYCLTINTTICAGYCMTRDFNGKLFLPKFALSQDVCTYRDFMYKTVEIPGCPHHVTPYFSYPVAVSCKCGKCDTDYSDCIQEAVKMNYCTKPQKPHVVGLSI</sequence>
<gene>
    <name type="primary">TSHB</name>
</gene>
<name>TSHB_LAMGL</name>
<protein>
    <recommendedName>
        <fullName>Thyrotropin subunit beta</fullName>
    </recommendedName>
    <alternativeName>
        <fullName>Thyroid-stimulating hormone subunit beta</fullName>
        <shortName>TSH-B</shortName>
        <shortName>TSH-beta</shortName>
    </alternativeName>
    <alternativeName>
        <fullName>Thyrotropin beta chain</fullName>
    </alternativeName>
</protein>
<feature type="signal peptide" evidence="1">
    <location>
        <begin position="1"/>
        <end position="20"/>
    </location>
</feature>
<feature type="chain" id="PRO_0000011748" description="Thyrotropin subunit beta">
    <location>
        <begin position="21"/>
        <end position="132"/>
    </location>
</feature>
<feature type="propeptide" id="PRO_0000011749" evidence="1">
    <location>
        <begin position="133"/>
        <end position="138"/>
    </location>
</feature>
<feature type="glycosylation site" description="N-linked (GlcNAc...) asparagine" evidence="2">
    <location>
        <position position="43"/>
    </location>
</feature>
<feature type="disulfide bond" evidence="1">
    <location>
        <begin position="22"/>
        <end position="72"/>
    </location>
</feature>
<feature type="disulfide bond" evidence="1">
    <location>
        <begin position="36"/>
        <end position="87"/>
    </location>
</feature>
<feature type="disulfide bond" evidence="1">
    <location>
        <begin position="39"/>
        <end position="125"/>
    </location>
</feature>
<feature type="disulfide bond" evidence="1">
    <location>
        <begin position="47"/>
        <end position="103"/>
    </location>
</feature>
<feature type="disulfide bond" evidence="1">
    <location>
        <begin position="51"/>
        <end position="105"/>
    </location>
</feature>
<feature type="disulfide bond" evidence="1">
    <location>
        <begin position="108"/>
        <end position="115"/>
    </location>
</feature>
<organism>
    <name type="scientific">Lama glama</name>
    <name type="common">Llama</name>
    <dbReference type="NCBI Taxonomy" id="9844"/>
    <lineage>
        <taxon>Eukaryota</taxon>
        <taxon>Metazoa</taxon>
        <taxon>Chordata</taxon>
        <taxon>Craniata</taxon>
        <taxon>Vertebrata</taxon>
        <taxon>Euteleostomi</taxon>
        <taxon>Mammalia</taxon>
        <taxon>Eutheria</taxon>
        <taxon>Laurasiatheria</taxon>
        <taxon>Artiodactyla</taxon>
        <taxon>Tylopoda</taxon>
        <taxon>Camelidae</taxon>
        <taxon>Lama</taxon>
    </lineage>
</organism>
<proteinExistence type="evidence at transcript level"/>
<reference key="1">
    <citation type="submission" date="1997-02" db="EMBL/GenBank/DDBJ databases">
        <authorList>
            <person name="Kania S.A."/>
            <person name="Frank L.A."/>
            <person name="Odom T.F."/>
        </authorList>
    </citation>
    <scope>NUCLEOTIDE SEQUENCE [MRNA]</scope>
    <source>
        <tissue>Pituitary</tissue>
    </source>
</reference>
<keyword id="KW-1015">Disulfide bond</keyword>
<keyword id="KW-0325">Glycoprotein</keyword>
<keyword id="KW-0372">Hormone</keyword>
<keyword id="KW-0964">Secreted</keyword>
<keyword id="KW-0732">Signal</keyword>
<evidence type="ECO:0000250" key="1"/>
<evidence type="ECO:0000255" key="2"/>
<evidence type="ECO:0000305" key="3"/>
<dbReference type="EMBL" id="U89294">
    <property type="protein sequence ID" value="AAB49315.1"/>
    <property type="molecule type" value="mRNA"/>
</dbReference>
<dbReference type="SMR" id="P79357"/>
<dbReference type="GlyCosmos" id="P79357">
    <property type="glycosylation" value="1 site, No reported glycans"/>
</dbReference>
<dbReference type="GO" id="GO:0005737">
    <property type="term" value="C:cytoplasm"/>
    <property type="evidence" value="ECO:0007669"/>
    <property type="project" value="TreeGrafter"/>
</dbReference>
<dbReference type="GO" id="GO:0005615">
    <property type="term" value="C:extracellular space"/>
    <property type="evidence" value="ECO:0007669"/>
    <property type="project" value="TreeGrafter"/>
</dbReference>
<dbReference type="GO" id="GO:0005179">
    <property type="term" value="F:hormone activity"/>
    <property type="evidence" value="ECO:0007669"/>
    <property type="project" value="UniProtKB-KW"/>
</dbReference>
<dbReference type="GO" id="GO:0007186">
    <property type="term" value="P:G protein-coupled receptor signaling pathway"/>
    <property type="evidence" value="ECO:0007669"/>
    <property type="project" value="TreeGrafter"/>
</dbReference>
<dbReference type="CDD" id="cd00069">
    <property type="entry name" value="GHB_like"/>
    <property type="match status" value="1"/>
</dbReference>
<dbReference type="FunFam" id="2.10.90.10:FF:000007">
    <property type="entry name" value="Luteinizing hormone beta subunit"/>
    <property type="match status" value="1"/>
</dbReference>
<dbReference type="Gene3D" id="2.10.90.10">
    <property type="entry name" value="Cystine-knot cytokines"/>
    <property type="match status" value="1"/>
</dbReference>
<dbReference type="InterPro" id="IPR029034">
    <property type="entry name" value="Cystine-knot_cytokine"/>
</dbReference>
<dbReference type="InterPro" id="IPR006208">
    <property type="entry name" value="Glyco_hormone_CN"/>
</dbReference>
<dbReference type="InterPro" id="IPR001545">
    <property type="entry name" value="Gonadotropin_bsu"/>
</dbReference>
<dbReference type="InterPro" id="IPR018245">
    <property type="entry name" value="Gonadotropin_bsu_CS"/>
</dbReference>
<dbReference type="PANTHER" id="PTHR11515">
    <property type="entry name" value="GLYCOPROTEIN HORMONE BETA CHAIN"/>
    <property type="match status" value="1"/>
</dbReference>
<dbReference type="PANTHER" id="PTHR11515:SF5">
    <property type="entry name" value="THYROTROPIN SUBUNIT BETA"/>
    <property type="match status" value="1"/>
</dbReference>
<dbReference type="Pfam" id="PF00007">
    <property type="entry name" value="Cys_knot"/>
    <property type="match status" value="1"/>
</dbReference>
<dbReference type="SMART" id="SM00068">
    <property type="entry name" value="GHB"/>
    <property type="match status" value="1"/>
</dbReference>
<dbReference type="SUPFAM" id="SSF57501">
    <property type="entry name" value="Cystine-knot cytokines"/>
    <property type="match status" value="1"/>
</dbReference>
<dbReference type="PROSITE" id="PS00261">
    <property type="entry name" value="GLYCO_HORMONE_BETA_1"/>
    <property type="match status" value="1"/>
</dbReference>
<dbReference type="PROSITE" id="PS00689">
    <property type="entry name" value="GLYCO_HORMONE_BETA_2"/>
    <property type="match status" value="1"/>
</dbReference>